<evidence type="ECO:0000255" key="1">
    <source>
        <dbReference type="HAMAP-Rule" id="MF_00382"/>
    </source>
</evidence>
<evidence type="ECO:0000305" key="2"/>
<organism>
    <name type="scientific">Buchnera aphidicola subsp. Acyrthosiphon pisum (strain Tuc7)</name>
    <dbReference type="NCBI Taxonomy" id="561501"/>
    <lineage>
        <taxon>Bacteria</taxon>
        <taxon>Pseudomonadati</taxon>
        <taxon>Pseudomonadota</taxon>
        <taxon>Gammaproteobacteria</taxon>
        <taxon>Enterobacterales</taxon>
        <taxon>Erwiniaceae</taxon>
        <taxon>Buchnera</taxon>
    </lineage>
</organism>
<dbReference type="EMBL" id="CP001158">
    <property type="protein sequence ID" value="ACL29948.1"/>
    <property type="molecule type" value="Genomic_DNA"/>
</dbReference>
<dbReference type="RefSeq" id="WP_010895962.1">
    <property type="nucleotide sequence ID" value="NC_011834.1"/>
</dbReference>
<dbReference type="SMR" id="B8D733"/>
<dbReference type="KEGG" id="bau:BUAPTUC7_127"/>
<dbReference type="HOGENOM" id="CLU_123265_0_1_6"/>
<dbReference type="GO" id="GO:1990904">
    <property type="term" value="C:ribonucleoprotein complex"/>
    <property type="evidence" value="ECO:0007669"/>
    <property type="project" value="UniProtKB-KW"/>
</dbReference>
<dbReference type="GO" id="GO:0005840">
    <property type="term" value="C:ribosome"/>
    <property type="evidence" value="ECO:0007669"/>
    <property type="project" value="UniProtKB-KW"/>
</dbReference>
<dbReference type="GO" id="GO:0019843">
    <property type="term" value="F:rRNA binding"/>
    <property type="evidence" value="ECO:0007669"/>
    <property type="project" value="UniProtKB-UniRule"/>
</dbReference>
<dbReference type="GO" id="GO:0003735">
    <property type="term" value="F:structural constituent of ribosome"/>
    <property type="evidence" value="ECO:0007669"/>
    <property type="project" value="InterPro"/>
</dbReference>
<dbReference type="GO" id="GO:0000027">
    <property type="term" value="P:ribosomal large subunit assembly"/>
    <property type="evidence" value="ECO:0007669"/>
    <property type="project" value="UniProtKB-UniRule"/>
</dbReference>
<dbReference type="GO" id="GO:0006412">
    <property type="term" value="P:translation"/>
    <property type="evidence" value="ECO:0007669"/>
    <property type="project" value="InterPro"/>
</dbReference>
<dbReference type="CDD" id="cd07026">
    <property type="entry name" value="Ribosomal_L20"/>
    <property type="match status" value="1"/>
</dbReference>
<dbReference type="FunFam" id="1.10.1900.20:FF:000001">
    <property type="entry name" value="50S ribosomal protein L20"/>
    <property type="match status" value="1"/>
</dbReference>
<dbReference type="Gene3D" id="6.10.160.10">
    <property type="match status" value="1"/>
</dbReference>
<dbReference type="Gene3D" id="1.10.1900.20">
    <property type="entry name" value="Ribosomal protein L20"/>
    <property type="match status" value="1"/>
</dbReference>
<dbReference type="HAMAP" id="MF_00382">
    <property type="entry name" value="Ribosomal_bL20"/>
    <property type="match status" value="1"/>
</dbReference>
<dbReference type="InterPro" id="IPR005813">
    <property type="entry name" value="Ribosomal_bL20"/>
</dbReference>
<dbReference type="InterPro" id="IPR049946">
    <property type="entry name" value="RIBOSOMAL_L20_CS"/>
</dbReference>
<dbReference type="InterPro" id="IPR035566">
    <property type="entry name" value="Ribosomal_protein_bL20_C"/>
</dbReference>
<dbReference type="NCBIfam" id="TIGR01032">
    <property type="entry name" value="rplT_bact"/>
    <property type="match status" value="1"/>
</dbReference>
<dbReference type="PANTHER" id="PTHR10986">
    <property type="entry name" value="39S RIBOSOMAL PROTEIN L20"/>
    <property type="match status" value="1"/>
</dbReference>
<dbReference type="Pfam" id="PF00453">
    <property type="entry name" value="Ribosomal_L20"/>
    <property type="match status" value="1"/>
</dbReference>
<dbReference type="PRINTS" id="PR00062">
    <property type="entry name" value="RIBOSOMALL20"/>
</dbReference>
<dbReference type="SUPFAM" id="SSF74731">
    <property type="entry name" value="Ribosomal protein L20"/>
    <property type="match status" value="1"/>
</dbReference>
<dbReference type="PROSITE" id="PS00937">
    <property type="entry name" value="RIBOSOMAL_L20"/>
    <property type="match status" value="1"/>
</dbReference>
<accession>B8D733</accession>
<feature type="chain" id="PRO_1000193944" description="Large ribosomal subunit protein bL20">
    <location>
        <begin position="1"/>
        <end position="118"/>
    </location>
</feature>
<reference key="1">
    <citation type="journal article" date="2009" name="Science">
        <title>The dynamics and time scale of ongoing genomic erosion in symbiotic bacteria.</title>
        <authorList>
            <person name="Moran N.A."/>
            <person name="McLaughlin H.J."/>
            <person name="Sorek R."/>
        </authorList>
    </citation>
    <scope>NUCLEOTIDE SEQUENCE [LARGE SCALE GENOMIC DNA]</scope>
    <source>
        <strain>Tuc7</strain>
    </source>
</reference>
<proteinExistence type="inferred from homology"/>
<name>RL20_BUCAT</name>
<gene>
    <name evidence="1" type="primary">rplT</name>
    <name type="ordered locus">BUAPTUC7_127</name>
</gene>
<comment type="function">
    <text evidence="1">Binds directly to 23S ribosomal RNA and is necessary for the in vitro assembly process of the 50S ribosomal subunit. It is not involved in the protein synthesizing functions of that subunit.</text>
</comment>
<comment type="similarity">
    <text evidence="1">Belongs to the bacterial ribosomal protein bL20 family.</text>
</comment>
<keyword id="KW-0687">Ribonucleoprotein</keyword>
<keyword id="KW-0689">Ribosomal protein</keyword>
<keyword id="KW-0694">RNA-binding</keyword>
<keyword id="KW-0699">rRNA-binding</keyword>
<protein>
    <recommendedName>
        <fullName evidence="1">Large ribosomal subunit protein bL20</fullName>
    </recommendedName>
    <alternativeName>
        <fullName evidence="2">50S ribosomal protein L20</fullName>
    </alternativeName>
</protein>
<sequence length="118" mass="13777">MARIKRGVIAHARHKKILKQAKGYYGARSRIYRVAHQAVIKAGQYAYRDRRQRKRQFRQLWISRINAAVRQSKMSYSNFIFGLKKASINIDRKILSDIAIFDLLSFNALVKKAKEALL</sequence>